<feature type="signal peptide" evidence="2">
    <location>
        <begin position="1"/>
        <end position="19"/>
    </location>
</feature>
<feature type="chain" id="PRO_0000367397" description="GDSL esterase/lipase At3g43570">
    <location>
        <begin position="20"/>
        <end position="320"/>
    </location>
</feature>
<feature type="active site" description="Nucleophile" evidence="1">
    <location>
        <position position="37"/>
    </location>
</feature>
<feature type="active site" evidence="1">
    <location>
        <position position="295"/>
    </location>
</feature>
<feature type="active site" evidence="1">
    <location>
        <position position="298"/>
    </location>
</feature>
<feature type="glycosylation site" description="N-linked (GlcNAc...) asparagine" evidence="2">
    <location>
        <position position="25"/>
    </location>
</feature>
<feature type="glycosylation site" description="N-linked (GlcNAc...) asparagine" evidence="2">
    <location>
        <position position="287"/>
    </location>
</feature>
<keyword id="KW-0325">Glycoprotein</keyword>
<keyword id="KW-0378">Hydrolase</keyword>
<keyword id="KW-0442">Lipid degradation</keyword>
<keyword id="KW-0443">Lipid metabolism</keyword>
<keyword id="KW-1185">Reference proteome</keyword>
<keyword id="KW-0964">Secreted</keyword>
<keyword id="KW-0732">Signal</keyword>
<evidence type="ECO:0000250" key="1"/>
<evidence type="ECO:0000255" key="2"/>
<evidence type="ECO:0000305" key="3"/>
<gene>
    <name type="ordered locus">At3g43570</name>
    <name type="ORF">F22J12.10</name>
</gene>
<sequence>MKIQIIWLTLVLIVVEANAVKQGKNATIPALIVFGDSIMDTGNNNNLPTLLKCNFPPYGKDYPGGFATGRFSDGRVPSDLIAEKIGLAKTLPAYMNPYLKPEDLLKGVTFASGGTGYDPLTAKIMSVISVWDQLIYFKEYISKIKRHFGEEKAKDILEHSFFLVVSSSNDLAHTYLAQAHRYDRTSYANFLADSAVHFVRELHKLGAQKIGVFSAVPVGCVPLQRTVFGDKELDGVILYINVYDTLFDMIQHPKKYGFEVADRGCCGKGLLTISYLCNSLNQFTCSNSSAYIFWDSYHPSKRAYQVIVDNLLDKYLSKVY</sequence>
<dbReference type="EC" id="3.1.1.-"/>
<dbReference type="EMBL" id="AL391734">
    <property type="protein sequence ID" value="CAC05631.1"/>
    <property type="molecule type" value="Genomic_DNA"/>
</dbReference>
<dbReference type="EMBL" id="CP002686">
    <property type="protein sequence ID" value="AEE77806.1"/>
    <property type="molecule type" value="Genomic_DNA"/>
</dbReference>
<dbReference type="RefSeq" id="NP_189943.1">
    <property type="nucleotide sequence ID" value="NM_114225.1"/>
</dbReference>
<dbReference type="FunCoup" id="Q9FYD3">
    <property type="interactions" value="75"/>
</dbReference>
<dbReference type="GlyGen" id="Q9FYD3">
    <property type="glycosylation" value="2 sites"/>
</dbReference>
<dbReference type="PaxDb" id="3702-AT3G43570.1"/>
<dbReference type="ProteomicsDB" id="221980"/>
<dbReference type="EnsemblPlants" id="AT3G43570.1">
    <property type="protein sequence ID" value="AT3G43570.1"/>
    <property type="gene ID" value="AT3G43570"/>
</dbReference>
<dbReference type="GeneID" id="823453"/>
<dbReference type="Gramene" id="AT3G43570.1">
    <property type="protein sequence ID" value="AT3G43570.1"/>
    <property type="gene ID" value="AT3G43570"/>
</dbReference>
<dbReference type="KEGG" id="ath:AT3G43570"/>
<dbReference type="Araport" id="AT3G43570"/>
<dbReference type="TAIR" id="AT3G43570"/>
<dbReference type="eggNOG" id="ENOG502SJTB">
    <property type="taxonomic scope" value="Eukaryota"/>
</dbReference>
<dbReference type="HOGENOM" id="CLU_015101_0_1_1"/>
<dbReference type="InParanoid" id="Q9FYD3"/>
<dbReference type="OMA" id="IETAFAC"/>
<dbReference type="PhylomeDB" id="Q9FYD3"/>
<dbReference type="PRO" id="PR:Q9FYD3"/>
<dbReference type="Proteomes" id="UP000006548">
    <property type="component" value="Chromosome 3"/>
</dbReference>
<dbReference type="GO" id="GO:0005576">
    <property type="term" value="C:extracellular region"/>
    <property type="evidence" value="ECO:0007669"/>
    <property type="project" value="UniProtKB-SubCell"/>
</dbReference>
<dbReference type="GO" id="GO:0016298">
    <property type="term" value="F:lipase activity"/>
    <property type="evidence" value="ECO:0007669"/>
    <property type="project" value="InterPro"/>
</dbReference>
<dbReference type="GO" id="GO:0016042">
    <property type="term" value="P:lipid catabolic process"/>
    <property type="evidence" value="ECO:0007669"/>
    <property type="project" value="UniProtKB-KW"/>
</dbReference>
<dbReference type="CDD" id="cd01837">
    <property type="entry name" value="SGNH_plant_lipase_like"/>
    <property type="match status" value="1"/>
</dbReference>
<dbReference type="FunFam" id="3.40.50.1110:FF:000003">
    <property type="entry name" value="GDSL esterase/lipase APG"/>
    <property type="match status" value="1"/>
</dbReference>
<dbReference type="Gene3D" id="3.40.50.1110">
    <property type="entry name" value="SGNH hydrolase"/>
    <property type="match status" value="1"/>
</dbReference>
<dbReference type="InterPro" id="IPR001087">
    <property type="entry name" value="GDSL"/>
</dbReference>
<dbReference type="InterPro" id="IPR050592">
    <property type="entry name" value="GDSL_lipolytic_enzyme"/>
</dbReference>
<dbReference type="InterPro" id="IPR008265">
    <property type="entry name" value="Lipase_GDSL_AS"/>
</dbReference>
<dbReference type="InterPro" id="IPR036514">
    <property type="entry name" value="SGNH_hydro_sf"/>
</dbReference>
<dbReference type="InterPro" id="IPR035669">
    <property type="entry name" value="SGNH_plant_lipase-like"/>
</dbReference>
<dbReference type="PANTHER" id="PTHR45642:SF65">
    <property type="entry name" value="BNAA02G25900D PROTEIN"/>
    <property type="match status" value="1"/>
</dbReference>
<dbReference type="PANTHER" id="PTHR45642">
    <property type="entry name" value="GDSL ESTERASE/LIPASE EXL3"/>
    <property type="match status" value="1"/>
</dbReference>
<dbReference type="Pfam" id="PF00657">
    <property type="entry name" value="Lipase_GDSL"/>
    <property type="match status" value="1"/>
</dbReference>
<dbReference type="SUPFAM" id="SSF52266">
    <property type="entry name" value="SGNH hydrolase"/>
    <property type="match status" value="1"/>
</dbReference>
<dbReference type="PROSITE" id="PS01098">
    <property type="entry name" value="LIPASE_GDSL_SER"/>
    <property type="match status" value="1"/>
</dbReference>
<proteinExistence type="inferred from homology"/>
<reference key="1">
    <citation type="journal article" date="2000" name="Nature">
        <title>Sequence and analysis of chromosome 3 of the plant Arabidopsis thaliana.</title>
        <authorList>
            <person name="Salanoubat M."/>
            <person name="Lemcke K."/>
            <person name="Rieger M."/>
            <person name="Ansorge W."/>
            <person name="Unseld M."/>
            <person name="Fartmann B."/>
            <person name="Valle G."/>
            <person name="Bloecker H."/>
            <person name="Perez-Alonso M."/>
            <person name="Obermaier B."/>
            <person name="Delseny M."/>
            <person name="Boutry M."/>
            <person name="Grivell L.A."/>
            <person name="Mache R."/>
            <person name="Puigdomenech P."/>
            <person name="De Simone V."/>
            <person name="Choisne N."/>
            <person name="Artiguenave F."/>
            <person name="Robert C."/>
            <person name="Brottier P."/>
            <person name="Wincker P."/>
            <person name="Cattolico L."/>
            <person name="Weissenbach J."/>
            <person name="Saurin W."/>
            <person name="Quetier F."/>
            <person name="Schaefer M."/>
            <person name="Mueller-Auer S."/>
            <person name="Gabel C."/>
            <person name="Fuchs M."/>
            <person name="Benes V."/>
            <person name="Wurmbach E."/>
            <person name="Drzonek H."/>
            <person name="Erfle H."/>
            <person name="Jordan N."/>
            <person name="Bangert S."/>
            <person name="Wiedelmann R."/>
            <person name="Kranz H."/>
            <person name="Voss H."/>
            <person name="Holland R."/>
            <person name="Brandt P."/>
            <person name="Nyakatura G."/>
            <person name="Vezzi A."/>
            <person name="D'Angelo M."/>
            <person name="Pallavicini A."/>
            <person name="Toppo S."/>
            <person name="Simionati B."/>
            <person name="Conrad A."/>
            <person name="Hornischer K."/>
            <person name="Kauer G."/>
            <person name="Loehnert T.-H."/>
            <person name="Nordsiek G."/>
            <person name="Reichelt J."/>
            <person name="Scharfe M."/>
            <person name="Schoen O."/>
            <person name="Bargues M."/>
            <person name="Terol J."/>
            <person name="Climent J."/>
            <person name="Navarro P."/>
            <person name="Collado C."/>
            <person name="Perez-Perez A."/>
            <person name="Ottenwaelder B."/>
            <person name="Duchemin D."/>
            <person name="Cooke R."/>
            <person name="Laudie M."/>
            <person name="Berger-Llauro C."/>
            <person name="Purnelle B."/>
            <person name="Masuy D."/>
            <person name="de Haan M."/>
            <person name="Maarse A.C."/>
            <person name="Alcaraz J.-P."/>
            <person name="Cottet A."/>
            <person name="Casacuberta E."/>
            <person name="Monfort A."/>
            <person name="Argiriou A."/>
            <person name="Flores M."/>
            <person name="Liguori R."/>
            <person name="Vitale D."/>
            <person name="Mannhaupt G."/>
            <person name="Haase D."/>
            <person name="Schoof H."/>
            <person name="Rudd S."/>
            <person name="Zaccaria P."/>
            <person name="Mewes H.-W."/>
            <person name="Mayer K.F.X."/>
            <person name="Kaul S."/>
            <person name="Town C.D."/>
            <person name="Koo H.L."/>
            <person name="Tallon L.J."/>
            <person name="Jenkins J."/>
            <person name="Rooney T."/>
            <person name="Rizzo M."/>
            <person name="Walts A."/>
            <person name="Utterback T."/>
            <person name="Fujii C.Y."/>
            <person name="Shea T.P."/>
            <person name="Creasy T.H."/>
            <person name="Haas B."/>
            <person name="Maiti R."/>
            <person name="Wu D."/>
            <person name="Peterson J."/>
            <person name="Van Aken S."/>
            <person name="Pai G."/>
            <person name="Militscher J."/>
            <person name="Sellers P."/>
            <person name="Gill J.E."/>
            <person name="Feldblyum T.V."/>
            <person name="Preuss D."/>
            <person name="Lin X."/>
            <person name="Nierman W.C."/>
            <person name="Salzberg S.L."/>
            <person name="White O."/>
            <person name="Venter J.C."/>
            <person name="Fraser C.M."/>
            <person name="Kaneko T."/>
            <person name="Nakamura Y."/>
            <person name="Sato S."/>
            <person name="Kato T."/>
            <person name="Asamizu E."/>
            <person name="Sasamoto S."/>
            <person name="Kimura T."/>
            <person name="Idesawa K."/>
            <person name="Kawashima K."/>
            <person name="Kishida Y."/>
            <person name="Kiyokawa C."/>
            <person name="Kohara M."/>
            <person name="Matsumoto M."/>
            <person name="Matsuno A."/>
            <person name="Muraki A."/>
            <person name="Nakayama S."/>
            <person name="Nakazaki N."/>
            <person name="Shinpo S."/>
            <person name="Takeuchi C."/>
            <person name="Wada T."/>
            <person name="Watanabe A."/>
            <person name="Yamada M."/>
            <person name="Yasuda M."/>
            <person name="Tabata S."/>
        </authorList>
    </citation>
    <scope>NUCLEOTIDE SEQUENCE [LARGE SCALE GENOMIC DNA]</scope>
    <source>
        <strain>cv. Columbia</strain>
    </source>
</reference>
<reference key="2">
    <citation type="journal article" date="2017" name="Plant J.">
        <title>Araport11: a complete reannotation of the Arabidopsis thaliana reference genome.</title>
        <authorList>
            <person name="Cheng C.Y."/>
            <person name="Krishnakumar V."/>
            <person name="Chan A.P."/>
            <person name="Thibaud-Nissen F."/>
            <person name="Schobel S."/>
            <person name="Town C.D."/>
        </authorList>
    </citation>
    <scope>GENOME REANNOTATION</scope>
    <source>
        <strain>cv. Columbia</strain>
    </source>
</reference>
<reference key="3">
    <citation type="journal article" date="2004" name="Prog. Lipid Res.">
        <title>GDSL family of serine esterases/lipases.</title>
        <authorList>
            <person name="Akoh C.C."/>
            <person name="Lee G.-C."/>
            <person name="Liaw Y.-C."/>
            <person name="Huang T.-H."/>
            <person name="Shaw J.-F."/>
        </authorList>
    </citation>
    <scope>REVIEW</scope>
</reference>
<reference key="4">
    <citation type="journal article" date="2008" name="Pak. J. Biol. Sci.">
        <title>Sequence analysis of GDSL lipase gene family in Arabidopsis thaliana.</title>
        <authorList>
            <person name="Ling H."/>
        </authorList>
    </citation>
    <scope>GENE FAMILY</scope>
</reference>
<organism>
    <name type="scientific">Arabidopsis thaliana</name>
    <name type="common">Mouse-ear cress</name>
    <dbReference type="NCBI Taxonomy" id="3702"/>
    <lineage>
        <taxon>Eukaryota</taxon>
        <taxon>Viridiplantae</taxon>
        <taxon>Streptophyta</taxon>
        <taxon>Embryophyta</taxon>
        <taxon>Tracheophyta</taxon>
        <taxon>Spermatophyta</taxon>
        <taxon>Magnoliopsida</taxon>
        <taxon>eudicotyledons</taxon>
        <taxon>Gunneridae</taxon>
        <taxon>Pentapetalae</taxon>
        <taxon>rosids</taxon>
        <taxon>malvids</taxon>
        <taxon>Brassicales</taxon>
        <taxon>Brassicaceae</taxon>
        <taxon>Camelineae</taxon>
        <taxon>Arabidopsis</taxon>
    </lineage>
</organism>
<name>GDL56_ARATH</name>
<accession>Q9FYD3</accession>
<protein>
    <recommendedName>
        <fullName>GDSL esterase/lipase At3g43570</fullName>
        <ecNumber>3.1.1.-</ecNumber>
    </recommendedName>
    <alternativeName>
        <fullName>Extracellular lipase At3g43570</fullName>
    </alternativeName>
</protein>
<comment type="subcellular location">
    <subcellularLocation>
        <location evidence="3">Secreted</location>
    </subcellularLocation>
</comment>
<comment type="similarity">
    <text evidence="3">Belongs to the 'GDSL' lipolytic enzyme family.</text>
</comment>